<proteinExistence type="evidence at transcript level"/>
<feature type="chain" id="PRO_0000277882" description="Dynein regulatory complex protein 1">
    <location>
        <begin position="1"/>
        <end position="740"/>
    </location>
</feature>
<feature type="region of interest" description="Disordered" evidence="4">
    <location>
        <begin position="56"/>
        <end position="75"/>
    </location>
</feature>
<feature type="region of interest" description="Disordered" evidence="4">
    <location>
        <begin position="573"/>
        <end position="620"/>
    </location>
</feature>
<feature type="coiled-coil region" evidence="3">
    <location>
        <begin position="101"/>
        <end position="387"/>
    </location>
</feature>
<feature type="coiled-coil region" evidence="3">
    <location>
        <begin position="691"/>
        <end position="724"/>
    </location>
</feature>
<feature type="compositionally biased region" description="Basic and acidic residues" evidence="4">
    <location>
        <begin position="595"/>
        <end position="605"/>
    </location>
</feature>
<feature type="splice variant" id="VSP_023122" description="In isoform 2." evidence="5">
    <original>ENSSLEQ</original>
    <variation>ELQRPMC</variation>
    <location>
        <begin position="700"/>
        <end position="706"/>
    </location>
</feature>
<feature type="splice variant" id="VSP_023123" description="In isoform 2." evidence="5">
    <location>
        <begin position="707"/>
        <end position="740"/>
    </location>
</feature>
<feature type="sequence conflict" description="In Ref. 1; BAB63129/BAB62967/BAB63098/BAB63106/BAB63073." evidence="6" ref="1">
    <original>P</original>
    <variation>A</variation>
    <location>
        <position position="49"/>
    </location>
</feature>
<feature type="sequence conflict" description="In Ref. 1; BAB63129." evidence="6" ref="1">
    <original>Y</original>
    <variation>C</variation>
    <location>
        <position position="269"/>
    </location>
</feature>
<feature type="sequence conflict" description="In Ref. 3; BAB01685." evidence="6" ref="3">
    <original>F</original>
    <variation>S</variation>
    <location>
        <position position="362"/>
    </location>
</feature>
<feature type="sequence conflict" description="In Ref. 1; BAB63129/BAB62967/BAB63098/BAB63106." evidence="6" ref="1">
    <original>V</original>
    <variation>I</variation>
    <location>
        <position position="487"/>
    </location>
</feature>
<feature type="sequence conflict" description="In Ref. 1; BAB63106." evidence="6" ref="1">
    <original>L</original>
    <variation>P</variation>
    <location>
        <position position="698"/>
    </location>
</feature>
<feature type="sequence conflict" description="In Ref. 1; BAB63129/BAB63098/BAB63106." evidence="6" ref="1">
    <original>R</original>
    <variation>W</variation>
    <location>
        <position position="736"/>
    </location>
</feature>
<organism>
    <name type="scientific">Macaca fascicularis</name>
    <name type="common">Crab-eating macaque</name>
    <name type="synonym">Cynomolgus monkey</name>
    <dbReference type="NCBI Taxonomy" id="9541"/>
    <lineage>
        <taxon>Eukaryota</taxon>
        <taxon>Metazoa</taxon>
        <taxon>Chordata</taxon>
        <taxon>Craniata</taxon>
        <taxon>Vertebrata</taxon>
        <taxon>Euteleostomi</taxon>
        <taxon>Mammalia</taxon>
        <taxon>Eutheria</taxon>
        <taxon>Euarchontoglires</taxon>
        <taxon>Primates</taxon>
        <taxon>Haplorrhini</taxon>
        <taxon>Catarrhini</taxon>
        <taxon>Cercopithecidae</taxon>
        <taxon>Cercopithecinae</taxon>
        <taxon>Macaca</taxon>
    </lineage>
</organism>
<comment type="function">
    <text evidence="1 2">Component of the nexin-dynein regulatory complex (N-DRC) a key regulator of ciliary/flagellar motility which maintains the alignment and integrity of the distal axoneme and regulates microtubule sliding in motile axonemes. Plays a critical role in the assembly of N-DRC and also stabilizes the assembly of multiple inner dynein arms and radial spokes. Coassembles with CCDC65/DRC2 to form a central scaffold needed for assembly of the N-DRC and its attachment to the outer doublet microtubules.</text>
</comment>
<comment type="subunit">
    <text evidence="1 2">Component of the nexin-dynein regulatory complex (N-DRC). Interacts with CCDC65/DRC2, DRC3, GAS8/DRC4 and TCTE1/DRC5.</text>
</comment>
<comment type="subcellular location">
    <subcellularLocation>
        <location evidence="1">Cytoplasm</location>
        <location evidence="1">Cytoskeleton</location>
        <location evidence="1">Cilium axoneme</location>
    </subcellularLocation>
    <subcellularLocation>
        <location evidence="1">Cytoplasm</location>
        <location evidence="1">Cytoskeleton</location>
        <location evidence="1">Flagellum axoneme</location>
    </subcellularLocation>
</comment>
<comment type="alternative products">
    <event type="alternative splicing"/>
    <isoform>
        <id>Q95JM8-1</id>
        <name>1</name>
        <sequence type="displayed"/>
    </isoform>
    <isoform>
        <id>Q95JM8-2</id>
        <name>2</name>
        <sequence type="described" ref="VSP_023122 VSP_023123"/>
    </isoform>
</comment>
<comment type="similarity">
    <text evidence="6">Belongs to the DRC1 family.</text>
</comment>
<comment type="sequence caution" evidence="6">
    <conflict type="frameshift">
        <sequence resource="EMBL-CDS" id="BAB01685"/>
    </conflict>
</comment>
<comment type="sequence caution" evidence="6">
    <conflict type="erroneous termination">
        <sequence resource="EMBL-CDS" id="BAB63073"/>
    </conflict>
    <text>Truncated C-terminus.</text>
</comment>
<comment type="sequence caution" evidence="6">
    <conflict type="erroneous gene model prediction">
        <sequence resource="EMBL-CDS" id="EHH55432"/>
    </conflict>
</comment>
<gene>
    <name type="primary">DRC1</name>
    <name type="synonym">CCDC164</name>
    <name type="ORF">QccE-11935</name>
    <name type="ORF">QtsA-11540</name>
    <name type="ORF">QtsA-14589</name>
    <name type="ORF">QtsA-15139</name>
    <name type="ORF">QtsA-15601</name>
    <name type="ORF">QtsA-16686</name>
</gene>
<reference key="1">
    <citation type="journal article" date="2002" name="BMC Genomics">
        <title>Cynomolgus monkey testicular cDNAs for discovery of novel human genes in the human genome sequence.</title>
        <authorList>
            <person name="Osada N."/>
            <person name="Hida M."/>
            <person name="Kusuda J."/>
            <person name="Tanuma R."/>
            <person name="Hirata M."/>
            <person name="Suto Y."/>
            <person name="Hirai M."/>
            <person name="Terao K."/>
            <person name="Sugano S."/>
            <person name="Hashimoto K."/>
        </authorList>
    </citation>
    <scope>NUCLEOTIDE SEQUENCE [LARGE SCALE MRNA] (ISOFORMS 1 AND 2)</scope>
    <source>
        <tissue>Testis</tissue>
    </source>
</reference>
<reference key="2">
    <citation type="journal article" date="2011" name="Nat. Biotechnol.">
        <title>Genome sequencing and comparison of two nonhuman primate animal models, the cynomolgus and Chinese rhesus macaques.</title>
        <authorList>
            <person name="Yan G."/>
            <person name="Zhang G."/>
            <person name="Fang X."/>
            <person name="Zhang Y."/>
            <person name="Li C."/>
            <person name="Ling F."/>
            <person name="Cooper D.N."/>
            <person name="Li Q."/>
            <person name="Li Y."/>
            <person name="van Gool A.J."/>
            <person name="Du H."/>
            <person name="Chen J."/>
            <person name="Chen R."/>
            <person name="Zhang P."/>
            <person name="Huang Z."/>
            <person name="Thompson J.R."/>
            <person name="Meng Y."/>
            <person name="Bai Y."/>
            <person name="Wang J."/>
            <person name="Zhuo M."/>
            <person name="Wang T."/>
            <person name="Huang Y."/>
            <person name="Wei L."/>
            <person name="Li J."/>
            <person name="Wang Z."/>
            <person name="Hu H."/>
            <person name="Yang P."/>
            <person name="Le L."/>
            <person name="Stenson P.D."/>
            <person name="Li B."/>
            <person name="Liu X."/>
            <person name="Ball E.V."/>
            <person name="An N."/>
            <person name="Huang Q."/>
            <person name="Zhang Y."/>
            <person name="Fan W."/>
            <person name="Zhang X."/>
            <person name="Li Y."/>
            <person name="Wang W."/>
            <person name="Katze M.G."/>
            <person name="Su B."/>
            <person name="Nielsen R."/>
            <person name="Yang H."/>
            <person name="Wang J."/>
            <person name="Wang X."/>
            <person name="Wang J."/>
        </authorList>
    </citation>
    <scope>NUCLEOTIDE SEQUENCE [LARGE SCALE GENOMIC DNA]</scope>
</reference>
<reference key="3">
    <citation type="journal article" date="2001" name="Gene">
        <title>Assignment of 118 novel cDNAs of cynomolgus monkey brain to human chromosomes.</title>
        <authorList>
            <person name="Osada N."/>
            <person name="Hida M."/>
            <person name="Kususda J."/>
            <person name="Tanuma R."/>
            <person name="Iseki K."/>
            <person name="Hirata M."/>
            <person name="Suto Y."/>
            <person name="Hirai M."/>
            <person name="Terao K."/>
            <person name="Suzuki Y."/>
            <person name="Sugano S."/>
            <person name="Hashimoto K."/>
        </authorList>
    </citation>
    <scope>NUCLEOTIDE SEQUENCE [LARGE SCALE MRNA] OF 328-740 (ISOFORM 1)</scope>
    <source>
        <tissue>Brain cortex</tissue>
    </source>
</reference>
<reference key="4">
    <citation type="journal article" date="2001" name="Gene">
        <authorList>
            <person name="Osada N."/>
            <person name="Hida M."/>
            <person name="Kusuda J."/>
            <person name="Tanuma R."/>
            <person name="Iseki K."/>
            <person name="Hirata M."/>
            <person name="Suto Y."/>
            <person name="Hirai M."/>
            <person name="Terao K."/>
            <person name="Suzuki Y."/>
            <person name="Sugano S."/>
            <person name="Hashimoto K."/>
            <person name="Kususda J."/>
        </authorList>
    </citation>
    <scope>ERRATUM OF PUBMED:11574149</scope>
</reference>
<keyword id="KW-0025">Alternative splicing</keyword>
<keyword id="KW-0966">Cell projection</keyword>
<keyword id="KW-0969">Cilium</keyword>
<keyword id="KW-0175">Coiled coil</keyword>
<keyword id="KW-0963">Cytoplasm</keyword>
<keyword id="KW-0206">Cytoskeleton</keyword>
<keyword id="KW-0282">Flagellum</keyword>
<keyword id="KW-1185">Reference proteome</keyword>
<sequence>MNPPGSLAGLDPNLDEHLSTQILAPSVHSDNPQERIQARRLRIAARLEPRRREALGEYLDGKKESEEDQSKSYKQKEESRLKLAKLLLCGTELVTNIQVAIDIREIHRRVEEEEIKRQRIEKLENEVKTSQDKFDEITSKWEEGKQKRIPQELWEMLNTQQLHCAGLLEDKNKLISELQQELKTKDDQYVKDLKKQSDDICLLLERMEEQVKNVMKTFREELYNIEKAFEVERQELLASNKKKWERALQAHNAKELEYLTNRMKKVEDYEKQLNRQRIWDCEEYNTIKIKLEQDVQILEQQLQQRKAIYQLNQEKLEYNLQVLKKRDEESTVIKSQQKRKINRLHDILNNLRSKYAKQIKQFQEENQSLTLDYKRLVLQFKELQKAMRHFALIDDEKFREIWLMNEEEAKDLIARAFDVDRIIHTHHLGLPWTAPDFWFLKNVGPISQQPQKSATQIVEEMLMHTEEEEAEEAASEPESYLDLPKQVSEKTTKKILMLLCDESGFLIESKLLSLLLPLEQNECYLLRLDAIFSALGIESEDDLYKLVNFFLKYRAHRLSSSLQIKSCSQASMEKASMEETSMGSELELAEQTEMEGAKEESLVEGEKEEEEETPPSPWDIHPNDVLKILEAFVMGLKKPRDSRAPPRVQKNMRNNSKDSEYWQALTTVIPSSKQNLWDALYTALEKYHIVLTQRAKLLLENSSLEQRNTELQALLQQYLNSKINSELQVPPTQVLRVPTK</sequence>
<name>DRC1_MACFA</name>
<dbReference type="EMBL" id="AB070022">
    <property type="protein sequence ID" value="BAB62967.1"/>
    <property type="molecule type" value="mRNA"/>
</dbReference>
<dbReference type="EMBL" id="AB070128">
    <property type="protein sequence ID" value="BAB63073.1"/>
    <property type="status" value="ALT_SEQ"/>
    <property type="molecule type" value="mRNA"/>
</dbReference>
<dbReference type="EMBL" id="AB070153">
    <property type="protein sequence ID" value="BAB63098.1"/>
    <property type="molecule type" value="mRNA"/>
</dbReference>
<dbReference type="EMBL" id="AB070161">
    <property type="protein sequence ID" value="BAB63106.1"/>
    <property type="molecule type" value="mRNA"/>
</dbReference>
<dbReference type="EMBL" id="AB070184">
    <property type="protein sequence ID" value="BAB63129.1"/>
    <property type="molecule type" value="mRNA"/>
</dbReference>
<dbReference type="EMBL" id="CM001288">
    <property type="protein sequence ID" value="EHH55432.1"/>
    <property type="status" value="ALT_SEQ"/>
    <property type="molecule type" value="Genomic_DNA"/>
</dbReference>
<dbReference type="EMBL" id="AB046103">
    <property type="protein sequence ID" value="BAB01685.1"/>
    <property type="status" value="ALT_FRAME"/>
    <property type="molecule type" value="mRNA"/>
</dbReference>
<dbReference type="SMR" id="Q95JM8"/>
<dbReference type="STRING" id="9541.ENSMFAP00000024355"/>
<dbReference type="eggNOG" id="ENOG502QQ2B">
    <property type="taxonomic scope" value="Eukaryota"/>
</dbReference>
<dbReference type="Proteomes" id="UP000009130">
    <property type="component" value="Chromosome 13"/>
</dbReference>
<dbReference type="Proteomes" id="UP000233100">
    <property type="component" value="Unplaced"/>
</dbReference>
<dbReference type="GO" id="GO:0005858">
    <property type="term" value="C:axonemal dynein complex"/>
    <property type="evidence" value="ECO:0007669"/>
    <property type="project" value="InterPro"/>
</dbReference>
<dbReference type="GO" id="GO:0005930">
    <property type="term" value="C:axoneme"/>
    <property type="evidence" value="ECO:0000250"/>
    <property type="project" value="UniProtKB"/>
</dbReference>
<dbReference type="GO" id="GO:0031514">
    <property type="term" value="C:motile cilium"/>
    <property type="evidence" value="ECO:0007669"/>
    <property type="project" value="UniProtKB-KW"/>
</dbReference>
<dbReference type="GO" id="GO:0070286">
    <property type="term" value="P:axonemal dynein complex assembly"/>
    <property type="evidence" value="ECO:0000250"/>
    <property type="project" value="UniProtKB"/>
</dbReference>
<dbReference type="GO" id="GO:0060285">
    <property type="term" value="P:cilium-dependent cell motility"/>
    <property type="evidence" value="ECO:0000250"/>
    <property type="project" value="UniProtKB"/>
</dbReference>
<dbReference type="GO" id="GO:0003352">
    <property type="term" value="P:regulation of cilium movement"/>
    <property type="evidence" value="ECO:0007669"/>
    <property type="project" value="TreeGrafter"/>
</dbReference>
<dbReference type="InterPro" id="IPR039505">
    <property type="entry name" value="DRC1/2_N"/>
</dbReference>
<dbReference type="InterPro" id="IPR039750">
    <property type="entry name" value="DRC1/DRC2"/>
</dbReference>
<dbReference type="InterPro" id="IPR029440">
    <property type="entry name" value="DRC1_C"/>
</dbReference>
<dbReference type="PANTHER" id="PTHR21625:SF1">
    <property type="entry name" value="DYNEIN REGULATORY COMPLEX PROTEIN 1"/>
    <property type="match status" value="1"/>
</dbReference>
<dbReference type="PANTHER" id="PTHR21625">
    <property type="entry name" value="NYD-SP28 PROTEIN"/>
    <property type="match status" value="1"/>
</dbReference>
<dbReference type="Pfam" id="PF14772">
    <property type="entry name" value="NYD-SP28"/>
    <property type="match status" value="1"/>
</dbReference>
<dbReference type="Pfam" id="PF14775">
    <property type="entry name" value="NYD-SP28_assoc"/>
    <property type="match status" value="1"/>
</dbReference>
<accession>Q95JM8</accession>
<accession>G7PLT7</accession>
<accession>Q95JJ7</accession>
<accession>Q95JM0</accession>
<accession>Q95JQ2</accession>
<accession>Q95K05</accession>
<accession>Q9N029</accession>
<protein>
    <recommendedName>
        <fullName>Dynein regulatory complex protein 1</fullName>
    </recommendedName>
    <alternativeName>
        <fullName>Coiled-coil domain-containing protein 164</fullName>
    </alternativeName>
</protein>
<evidence type="ECO:0000250" key="1">
    <source>
        <dbReference type="UniProtKB" id="P0DL09"/>
    </source>
</evidence>
<evidence type="ECO:0000250" key="2">
    <source>
        <dbReference type="UniProtKB" id="Q96MC2"/>
    </source>
</evidence>
<evidence type="ECO:0000255" key="3"/>
<evidence type="ECO:0000256" key="4">
    <source>
        <dbReference type="SAM" id="MobiDB-lite"/>
    </source>
</evidence>
<evidence type="ECO:0000303" key="5">
    <source>
    </source>
</evidence>
<evidence type="ECO:0000305" key="6"/>